<protein>
    <recommendedName>
        <fullName evidence="1">4-hydroxy-2-oxovalerate aldolase 2</fullName>
        <shortName evidence="1">HOA 2</shortName>
        <ecNumber evidence="1">4.1.3.39</ecNumber>
    </recommendedName>
    <alternativeName>
        <fullName evidence="1">4-hydroxy-2-keto-pentanoic acid aldolase 2</fullName>
    </alternativeName>
    <alternativeName>
        <fullName evidence="1">4-hydroxy-2-oxopentanoate aldolase 2</fullName>
    </alternativeName>
</protein>
<proteinExistence type="inferred from homology"/>
<feature type="chain" id="PRO_0000387821" description="4-hydroxy-2-oxovalerate aldolase 2">
    <location>
        <begin position="1"/>
        <end position="341"/>
    </location>
</feature>
<feature type="domain" description="Pyruvate carboxyltransferase" evidence="1">
    <location>
        <begin position="8"/>
        <end position="260"/>
    </location>
</feature>
<feature type="active site" description="Proton acceptor" evidence="1">
    <location>
        <position position="20"/>
    </location>
</feature>
<feature type="binding site" evidence="1">
    <location>
        <begin position="16"/>
        <end position="17"/>
    </location>
    <ligand>
        <name>substrate</name>
    </ligand>
</feature>
<feature type="binding site" evidence="1">
    <location>
        <position position="17"/>
    </location>
    <ligand>
        <name>Mn(2+)</name>
        <dbReference type="ChEBI" id="CHEBI:29035"/>
    </ligand>
</feature>
<feature type="binding site" evidence="1">
    <location>
        <position position="170"/>
    </location>
    <ligand>
        <name>substrate</name>
    </ligand>
</feature>
<feature type="binding site" evidence="1">
    <location>
        <position position="199"/>
    </location>
    <ligand>
        <name>Mn(2+)</name>
        <dbReference type="ChEBI" id="CHEBI:29035"/>
    </ligand>
</feature>
<feature type="binding site" evidence="1">
    <location>
        <position position="199"/>
    </location>
    <ligand>
        <name>substrate</name>
    </ligand>
</feature>
<feature type="binding site" evidence="1">
    <location>
        <position position="201"/>
    </location>
    <ligand>
        <name>Mn(2+)</name>
        <dbReference type="ChEBI" id="CHEBI:29035"/>
    </ligand>
</feature>
<feature type="binding site" evidence="1">
    <location>
        <position position="290"/>
    </location>
    <ligand>
        <name>substrate</name>
    </ligand>
</feature>
<feature type="site" description="Transition state stabilizer" evidence="1">
    <location>
        <position position="16"/>
    </location>
</feature>
<name>HOA2_DECAR</name>
<sequence>MTLKGKKVTVHDMTLRDGMHPKRHLMTLDQMTAIATGLDAAGVPLIEVTHGDGLGGSSVNYGFPAHTDEEYLGAVIPKMKNAKVSALLLPGIGTVDHLKMARDLGVHTIRVATHCTEADVSEQHITMARKLEMDTVGFLMMAHMNSAEGLVKQAKLMESYGANCIYVTDSAGHLLPEGVKERLSAVRAALKPETELGFHGHHNLAMGVANSIAAIEVGANRIDAAAAGLGAGAGNTPMEVLIAVCSLMGIETGVDVAKITDVAEDLVVPMMDFPIRIDRDALTLGYAGVYGSFLLFAKRASAKYGVPARDILVELGRRGMVGGQEDMIEDTAITMARERGV</sequence>
<accession>Q47GC6</accession>
<organism>
    <name type="scientific">Dechloromonas aromatica (strain RCB)</name>
    <dbReference type="NCBI Taxonomy" id="159087"/>
    <lineage>
        <taxon>Bacteria</taxon>
        <taxon>Pseudomonadati</taxon>
        <taxon>Pseudomonadota</taxon>
        <taxon>Betaproteobacteria</taxon>
        <taxon>Rhodocyclales</taxon>
        <taxon>Azonexaceae</taxon>
        <taxon>Dechloromonas</taxon>
    </lineage>
</organism>
<evidence type="ECO:0000255" key="1">
    <source>
        <dbReference type="HAMAP-Rule" id="MF_01656"/>
    </source>
</evidence>
<dbReference type="EC" id="4.1.3.39" evidence="1"/>
<dbReference type="EMBL" id="CP000089">
    <property type="protein sequence ID" value="AAZ46105.1"/>
    <property type="molecule type" value="Genomic_DNA"/>
</dbReference>
<dbReference type="SMR" id="Q47GC6"/>
<dbReference type="STRING" id="159087.Daro_1356"/>
<dbReference type="KEGG" id="dar:Daro_1356"/>
<dbReference type="eggNOG" id="COG0119">
    <property type="taxonomic scope" value="Bacteria"/>
</dbReference>
<dbReference type="HOGENOM" id="CLU_049173_0_0_4"/>
<dbReference type="OrthoDB" id="9803573at2"/>
<dbReference type="GO" id="GO:0003852">
    <property type="term" value="F:2-isopropylmalate synthase activity"/>
    <property type="evidence" value="ECO:0007669"/>
    <property type="project" value="TreeGrafter"/>
</dbReference>
<dbReference type="GO" id="GO:0008701">
    <property type="term" value="F:4-hydroxy-2-oxovalerate aldolase activity"/>
    <property type="evidence" value="ECO:0007669"/>
    <property type="project" value="UniProtKB-UniRule"/>
</dbReference>
<dbReference type="GO" id="GO:0030145">
    <property type="term" value="F:manganese ion binding"/>
    <property type="evidence" value="ECO:0007669"/>
    <property type="project" value="UniProtKB-UniRule"/>
</dbReference>
<dbReference type="GO" id="GO:0009056">
    <property type="term" value="P:catabolic process"/>
    <property type="evidence" value="ECO:0007669"/>
    <property type="project" value="UniProtKB-KW"/>
</dbReference>
<dbReference type="GO" id="GO:0009098">
    <property type="term" value="P:L-leucine biosynthetic process"/>
    <property type="evidence" value="ECO:0007669"/>
    <property type="project" value="TreeGrafter"/>
</dbReference>
<dbReference type="CDD" id="cd07943">
    <property type="entry name" value="DRE_TIM_HOA"/>
    <property type="match status" value="1"/>
</dbReference>
<dbReference type="Gene3D" id="1.10.8.60">
    <property type="match status" value="1"/>
</dbReference>
<dbReference type="Gene3D" id="3.20.20.70">
    <property type="entry name" value="Aldolase class I"/>
    <property type="match status" value="1"/>
</dbReference>
<dbReference type="HAMAP" id="MF_01656">
    <property type="entry name" value="HOA"/>
    <property type="match status" value="1"/>
</dbReference>
<dbReference type="InterPro" id="IPR050073">
    <property type="entry name" value="2-IPM_HCS-like"/>
</dbReference>
<dbReference type="InterPro" id="IPR017629">
    <property type="entry name" value="4OH_2_O-val_aldolase"/>
</dbReference>
<dbReference type="InterPro" id="IPR013785">
    <property type="entry name" value="Aldolase_TIM"/>
</dbReference>
<dbReference type="InterPro" id="IPR012425">
    <property type="entry name" value="DmpG_comm"/>
</dbReference>
<dbReference type="InterPro" id="IPR035685">
    <property type="entry name" value="DRE_TIM_HOA"/>
</dbReference>
<dbReference type="InterPro" id="IPR000891">
    <property type="entry name" value="PYR_CT"/>
</dbReference>
<dbReference type="NCBIfam" id="TIGR03217">
    <property type="entry name" value="4OH_2_O_val_ald"/>
    <property type="match status" value="1"/>
</dbReference>
<dbReference type="NCBIfam" id="NF006049">
    <property type="entry name" value="PRK08195.1"/>
    <property type="match status" value="1"/>
</dbReference>
<dbReference type="PANTHER" id="PTHR10277:SF9">
    <property type="entry name" value="2-ISOPROPYLMALATE SYNTHASE 1, CHLOROPLASTIC-RELATED"/>
    <property type="match status" value="1"/>
</dbReference>
<dbReference type="PANTHER" id="PTHR10277">
    <property type="entry name" value="HOMOCITRATE SYNTHASE-RELATED"/>
    <property type="match status" value="1"/>
</dbReference>
<dbReference type="Pfam" id="PF07836">
    <property type="entry name" value="DmpG_comm"/>
    <property type="match status" value="1"/>
</dbReference>
<dbReference type="Pfam" id="PF00682">
    <property type="entry name" value="HMGL-like"/>
    <property type="match status" value="1"/>
</dbReference>
<dbReference type="SUPFAM" id="SSF51569">
    <property type="entry name" value="Aldolase"/>
    <property type="match status" value="1"/>
</dbReference>
<dbReference type="SUPFAM" id="SSF89000">
    <property type="entry name" value="post-HMGL domain-like"/>
    <property type="match status" value="1"/>
</dbReference>
<dbReference type="PROSITE" id="PS50991">
    <property type="entry name" value="PYR_CT"/>
    <property type="match status" value="1"/>
</dbReference>
<reference key="1">
    <citation type="journal article" date="2009" name="BMC Genomics">
        <title>Metabolic analysis of the soil microbe Dechloromonas aromatica str. RCB: indications of a surprisingly complex life-style and cryptic anaerobic pathways for aromatic degradation.</title>
        <authorList>
            <person name="Salinero K.K."/>
            <person name="Keller K."/>
            <person name="Feil W.S."/>
            <person name="Feil H."/>
            <person name="Trong S."/>
            <person name="Di Bartolo G."/>
            <person name="Lapidus A."/>
        </authorList>
    </citation>
    <scope>NUCLEOTIDE SEQUENCE [LARGE SCALE GENOMIC DNA]</scope>
    <source>
        <strain>RCB</strain>
    </source>
</reference>
<gene>
    <name type="ordered locus">Daro_1356</name>
</gene>
<keyword id="KW-0058">Aromatic hydrocarbons catabolism</keyword>
<keyword id="KW-0456">Lyase</keyword>
<keyword id="KW-0464">Manganese</keyword>
<keyword id="KW-0479">Metal-binding</keyword>
<comment type="catalytic activity">
    <reaction evidence="1">
        <text>(S)-4-hydroxy-2-oxopentanoate = acetaldehyde + pyruvate</text>
        <dbReference type="Rhea" id="RHEA:22624"/>
        <dbReference type="ChEBI" id="CHEBI:15343"/>
        <dbReference type="ChEBI" id="CHEBI:15361"/>
        <dbReference type="ChEBI" id="CHEBI:73143"/>
        <dbReference type="EC" id="4.1.3.39"/>
    </reaction>
</comment>
<comment type="similarity">
    <text evidence="1">Belongs to the 4-hydroxy-2-oxovalerate aldolase family.</text>
</comment>